<protein>
    <recommendedName>
        <fullName>Putative Gly-rich membrane protein Bcell_0380</fullName>
    </recommendedName>
</protein>
<comment type="subcellular location">
    <subcellularLocation>
        <location evidence="3">Cell membrane</location>
        <topology evidence="3">Single-pass membrane protein</topology>
    </subcellularLocation>
</comment>
<accession>P0DJ97</accession>
<dbReference type="EMBL" id="CP002394">
    <property type="status" value="NOT_ANNOTATED_CDS"/>
    <property type="molecule type" value="Genomic_DNA"/>
</dbReference>
<dbReference type="RefSeq" id="WP_049786615.1">
    <property type="nucleotide sequence ID" value="NC_014829.1"/>
</dbReference>
<dbReference type="SMR" id="P0DJ97"/>
<dbReference type="OrthoDB" id="9802993at2"/>
<dbReference type="Proteomes" id="UP000001401">
    <property type="component" value="Chromosome"/>
</dbReference>
<dbReference type="GO" id="GO:0005886">
    <property type="term" value="C:plasma membrane"/>
    <property type="evidence" value="ECO:0007669"/>
    <property type="project" value="UniProtKB-SubCell"/>
</dbReference>
<dbReference type="Gene3D" id="2.160.20.110">
    <property type="match status" value="2"/>
</dbReference>
<dbReference type="Gene3D" id="2.60.40.4270">
    <property type="entry name" value="Listeria-Bacteroides repeat domain"/>
    <property type="match status" value="6"/>
</dbReference>
<dbReference type="InterPro" id="IPR011493">
    <property type="entry name" value="GLUG"/>
</dbReference>
<dbReference type="InterPro" id="IPR013378">
    <property type="entry name" value="InlB-like_B-rpt"/>
</dbReference>
<dbReference type="InterPro" id="IPR042229">
    <property type="entry name" value="Listeria/Bacterioides_rpt_sf"/>
</dbReference>
<dbReference type="NCBIfam" id="TIGR02543">
    <property type="entry name" value="List_Bact_rpt"/>
    <property type="match status" value="5"/>
</dbReference>
<dbReference type="Pfam" id="PF09479">
    <property type="entry name" value="Flg_new"/>
    <property type="match status" value="6"/>
</dbReference>
<dbReference type="Pfam" id="PF07581">
    <property type="entry name" value="Glug"/>
    <property type="match status" value="3"/>
</dbReference>
<feature type="chain" id="PRO_0000414219" description="Putative Gly-rich membrane protein Bcell_0380">
    <location>
        <begin position="1"/>
        <end position="864"/>
    </location>
</feature>
<feature type="transmembrane region" description="Helical" evidence="1">
    <location>
        <begin position="7"/>
        <end position="27"/>
    </location>
</feature>
<feature type="region of interest" description="Disordered" evidence="2">
    <location>
        <begin position="372"/>
        <end position="399"/>
    </location>
</feature>
<feature type="compositionally biased region" description="Polar residues" evidence="2">
    <location>
        <begin position="383"/>
        <end position="395"/>
    </location>
</feature>
<proteinExistence type="predicted"/>
<name>Y380_EVAC2</name>
<keyword id="KW-1003">Cell membrane</keyword>
<keyword id="KW-0472">Membrane</keyword>
<keyword id="KW-1185">Reference proteome</keyword>
<keyword id="KW-0812">Transmembrane</keyword>
<keyword id="KW-1133">Transmembrane helix</keyword>
<gene>
    <name type="ordered locus">Bcell_0380</name>
</gene>
<evidence type="ECO:0000255" key="1"/>
<evidence type="ECO:0000256" key="2">
    <source>
        <dbReference type="SAM" id="MobiDB-lite"/>
    </source>
</evidence>
<evidence type="ECO:0000305" key="3"/>
<sequence length="864" mass="94086">MKRIRHITFLAAFICIIFVIYAIYHSVGQADSSVFAGGEGTKENPYLIETAAHLDNVRNYLGEGYHFQLVQDIDLTAYLDPGGPGWEPIGDNANRFEGHINGNGYRITGFFINRTDGNYIGLFGVIGENGLVRNLSLTGDYITVEGAPALVGALTGNNYGVIDNVSVEIGDGITLSPQSAYVGGLVGTNHGEIWNSNVNSDVNGGNEVGGLVGRNASNNTTRIGIIHNSHATGNVSGQDMVGGLVGNASGKIRYSYATGNVDGLESVGGLIGTSVRIEVDASYATSDVTGESSVGGLIGDVRIDNSRSSVRNSFAIGKVTLPSTGGDVGGLIGTNFSGDVENSYAAGQIEASGASNVGGLIGRQAGGFSSGTVENSFYDEDTTGQSDTGKGTPMSTADMKDRSTFEDAGWDFDWIWGIESDDYPHHDLYFTLTYQADDLDHGDVPSDEIHSRGSVVLVADQGNMSRTGYSFSGWNTALDGSGETYDPYSPVFNSFVMGANDKTLYAQWSINKYDVHFDGNDYDSGQAPLTETILYESEVNVPDQHTLVKDGYTFTGWNTERDGSGDFYEPGDTFRMGTEPVTLYAQWEINVYSVSFESNGGSQVSEVEAEYGTAITEPLPPEKEGHLFKGWYQDELLTEAWDFETSKVSENMILYAKWEINEYTVSFESNGGSQVSEVEAEYGSSITEPVPPEKEGHSFKGWYQDEFLTEAWDFKTDTVSGDMTLYAKWEINVYSVSFESNGGSQVSEVDTEFASLIEEPTPPEKEGHSFKGWYQDKLLTEAWEFETDTVIGDMTLYAKWEINVYTVSFATNGGSKVSEVDAEFASLIAEPTPPEKEGHSFKEWYQDELLTEAWEFERTRLTKI</sequence>
<reference key="1">
    <citation type="submission" date="2010-12" db="EMBL/GenBank/DDBJ databases">
        <title>Complete sequence of Bacillus cellulosilyticus DSM 2522.</title>
        <authorList>
            <person name="Lucas S."/>
            <person name="Copeland A."/>
            <person name="Lapidus A."/>
            <person name="Cheng J.-F."/>
            <person name="Bruce D."/>
            <person name="Goodwin L."/>
            <person name="Pitluck S."/>
            <person name="Chertkov O."/>
            <person name="Detter J.C."/>
            <person name="Han C."/>
            <person name="Tapia R."/>
            <person name="Land M."/>
            <person name="Hauser L."/>
            <person name="Jeffries C."/>
            <person name="Kyrpides N."/>
            <person name="Ivanova N."/>
            <person name="Mikhailova N."/>
            <person name="Brumm P."/>
            <person name="Mead D."/>
            <person name="Woyke T."/>
        </authorList>
    </citation>
    <scope>NUCLEOTIDE SEQUENCE [LARGE SCALE GENOMIC DNA]</scope>
    <source>
        <strain>ATCC 21833 / DSM 2522 / FERM P-1141 / JCM 9156 / N-4</strain>
    </source>
</reference>
<organism>
    <name type="scientific">Evansella cellulosilytica (strain ATCC 21833 / DSM 2522 / FERM P-1141 / JCM 9156 / N-4)</name>
    <name type="common">Bacillus cellulosilyticus</name>
    <dbReference type="NCBI Taxonomy" id="649639"/>
    <lineage>
        <taxon>Bacteria</taxon>
        <taxon>Bacillati</taxon>
        <taxon>Bacillota</taxon>
        <taxon>Bacilli</taxon>
        <taxon>Bacillales</taxon>
        <taxon>Bacillaceae</taxon>
        <taxon>Evansella</taxon>
    </lineage>
</organism>